<reference key="1">
    <citation type="journal article" date="2008" name="Chem. Biol. Interact.">
        <title>Extending the Bacillus cereus group genomics to putative food-borne pathogens of different toxicity.</title>
        <authorList>
            <person name="Lapidus A."/>
            <person name="Goltsman E."/>
            <person name="Auger S."/>
            <person name="Galleron N."/>
            <person name="Segurens B."/>
            <person name="Dossat C."/>
            <person name="Land M.L."/>
            <person name="Broussolle V."/>
            <person name="Brillard J."/>
            <person name="Guinebretiere M.-H."/>
            <person name="Sanchis V."/>
            <person name="Nguen-the C."/>
            <person name="Lereclus D."/>
            <person name="Richardson P."/>
            <person name="Wincker P."/>
            <person name="Weissenbach J."/>
            <person name="Ehrlich S.D."/>
            <person name="Sorokin A."/>
        </authorList>
    </citation>
    <scope>NUCLEOTIDE SEQUENCE [LARGE SCALE GENOMIC DNA]</scope>
    <source>
        <strain>DSM 22905 / CIP 110041 / 391-98 / NVH 391-98</strain>
    </source>
</reference>
<keyword id="KW-0963">Cytoplasm</keyword>
<keyword id="KW-0275">Fatty acid biosynthesis</keyword>
<keyword id="KW-0276">Fatty acid metabolism</keyword>
<keyword id="KW-0444">Lipid biosynthesis</keyword>
<keyword id="KW-0443">Lipid metabolism</keyword>
<keyword id="KW-0596">Phosphopantetheine</keyword>
<keyword id="KW-0597">Phosphoprotein</keyword>
<gene>
    <name evidence="1" type="primary">acpP</name>
    <name type="ordered locus">Bcer98_2502</name>
</gene>
<name>ACP_BACCN</name>
<dbReference type="EMBL" id="CP000764">
    <property type="protein sequence ID" value="ABS22738.1"/>
    <property type="molecule type" value="Genomic_DNA"/>
</dbReference>
<dbReference type="RefSeq" id="WP_000786062.1">
    <property type="nucleotide sequence ID" value="NC_009674.1"/>
</dbReference>
<dbReference type="SMR" id="A7GRI0"/>
<dbReference type="STRING" id="315749.Bcer98_2502"/>
<dbReference type="GeneID" id="93007262"/>
<dbReference type="KEGG" id="bcy:Bcer98_2502"/>
<dbReference type="eggNOG" id="COG0236">
    <property type="taxonomic scope" value="Bacteria"/>
</dbReference>
<dbReference type="HOGENOM" id="CLU_108696_5_3_9"/>
<dbReference type="OrthoDB" id="9804551at2"/>
<dbReference type="UniPathway" id="UPA00094"/>
<dbReference type="Proteomes" id="UP000002300">
    <property type="component" value="Chromosome"/>
</dbReference>
<dbReference type="GO" id="GO:0005829">
    <property type="term" value="C:cytosol"/>
    <property type="evidence" value="ECO:0007669"/>
    <property type="project" value="TreeGrafter"/>
</dbReference>
<dbReference type="GO" id="GO:0016020">
    <property type="term" value="C:membrane"/>
    <property type="evidence" value="ECO:0007669"/>
    <property type="project" value="GOC"/>
</dbReference>
<dbReference type="GO" id="GO:0000035">
    <property type="term" value="F:acyl binding"/>
    <property type="evidence" value="ECO:0007669"/>
    <property type="project" value="TreeGrafter"/>
</dbReference>
<dbReference type="GO" id="GO:0000036">
    <property type="term" value="F:acyl carrier activity"/>
    <property type="evidence" value="ECO:0007669"/>
    <property type="project" value="UniProtKB-UniRule"/>
</dbReference>
<dbReference type="GO" id="GO:0009245">
    <property type="term" value="P:lipid A biosynthetic process"/>
    <property type="evidence" value="ECO:0007669"/>
    <property type="project" value="TreeGrafter"/>
</dbReference>
<dbReference type="FunFam" id="1.10.1200.10:FF:000001">
    <property type="entry name" value="Acyl carrier protein"/>
    <property type="match status" value="1"/>
</dbReference>
<dbReference type="Gene3D" id="1.10.1200.10">
    <property type="entry name" value="ACP-like"/>
    <property type="match status" value="1"/>
</dbReference>
<dbReference type="HAMAP" id="MF_01217">
    <property type="entry name" value="Acyl_carrier"/>
    <property type="match status" value="1"/>
</dbReference>
<dbReference type="InterPro" id="IPR003231">
    <property type="entry name" value="ACP"/>
</dbReference>
<dbReference type="InterPro" id="IPR036736">
    <property type="entry name" value="ACP-like_sf"/>
</dbReference>
<dbReference type="InterPro" id="IPR009081">
    <property type="entry name" value="PP-bd_ACP"/>
</dbReference>
<dbReference type="InterPro" id="IPR006162">
    <property type="entry name" value="Ppantetheine_attach_site"/>
</dbReference>
<dbReference type="NCBIfam" id="TIGR00517">
    <property type="entry name" value="acyl_carrier"/>
    <property type="match status" value="1"/>
</dbReference>
<dbReference type="NCBIfam" id="NF002148">
    <property type="entry name" value="PRK00982.1-2"/>
    <property type="match status" value="1"/>
</dbReference>
<dbReference type="NCBIfam" id="NF002149">
    <property type="entry name" value="PRK00982.1-3"/>
    <property type="match status" value="1"/>
</dbReference>
<dbReference type="NCBIfam" id="NF002150">
    <property type="entry name" value="PRK00982.1-4"/>
    <property type="match status" value="1"/>
</dbReference>
<dbReference type="NCBIfam" id="NF002151">
    <property type="entry name" value="PRK00982.1-5"/>
    <property type="match status" value="1"/>
</dbReference>
<dbReference type="PANTHER" id="PTHR20863">
    <property type="entry name" value="ACYL CARRIER PROTEIN"/>
    <property type="match status" value="1"/>
</dbReference>
<dbReference type="PANTHER" id="PTHR20863:SF76">
    <property type="entry name" value="CARRIER DOMAIN-CONTAINING PROTEIN"/>
    <property type="match status" value="1"/>
</dbReference>
<dbReference type="Pfam" id="PF00550">
    <property type="entry name" value="PP-binding"/>
    <property type="match status" value="1"/>
</dbReference>
<dbReference type="SUPFAM" id="SSF47336">
    <property type="entry name" value="ACP-like"/>
    <property type="match status" value="1"/>
</dbReference>
<dbReference type="PROSITE" id="PS50075">
    <property type="entry name" value="CARRIER"/>
    <property type="match status" value="1"/>
</dbReference>
<dbReference type="PROSITE" id="PS00012">
    <property type="entry name" value="PHOSPHOPANTETHEINE"/>
    <property type="match status" value="1"/>
</dbReference>
<sequence>MADVLERVTKIIVDRLGVEETEVVPAASFKEDLGADSLDVVELVMQLEDEFEMEISDEDAEKIATVGDAVTYIESHL</sequence>
<proteinExistence type="inferred from homology"/>
<organism>
    <name type="scientific">Bacillus cytotoxicus (strain DSM 22905 / CIP 110041 / 391-98 / NVH 391-98)</name>
    <dbReference type="NCBI Taxonomy" id="315749"/>
    <lineage>
        <taxon>Bacteria</taxon>
        <taxon>Bacillati</taxon>
        <taxon>Bacillota</taxon>
        <taxon>Bacilli</taxon>
        <taxon>Bacillales</taxon>
        <taxon>Bacillaceae</taxon>
        <taxon>Bacillus</taxon>
        <taxon>Bacillus cereus group</taxon>
    </lineage>
</organism>
<comment type="function">
    <text evidence="1">Carrier of the growing fatty acid chain in fatty acid biosynthesis.</text>
</comment>
<comment type="pathway">
    <text evidence="1">Lipid metabolism; fatty acid biosynthesis.</text>
</comment>
<comment type="subcellular location">
    <subcellularLocation>
        <location evidence="1">Cytoplasm</location>
    </subcellularLocation>
</comment>
<comment type="PTM">
    <text evidence="1">4'-phosphopantetheine is transferred from CoA to a specific serine of apo-ACP by AcpS. This modification is essential for activity because fatty acids are bound in thioester linkage to the sulfhydryl of the prosthetic group.</text>
</comment>
<comment type="similarity">
    <text evidence="1">Belongs to the acyl carrier protein (ACP) family.</text>
</comment>
<protein>
    <recommendedName>
        <fullName evidence="1">Acyl carrier protein</fullName>
        <shortName evidence="1">ACP</shortName>
    </recommendedName>
</protein>
<feature type="chain" id="PRO_1000085593" description="Acyl carrier protein">
    <location>
        <begin position="1"/>
        <end position="77"/>
    </location>
</feature>
<feature type="domain" description="Carrier" evidence="2">
    <location>
        <begin position="2"/>
        <end position="77"/>
    </location>
</feature>
<feature type="modified residue" description="O-(pantetheine 4'-phosphoryl)serine" evidence="2">
    <location>
        <position position="37"/>
    </location>
</feature>
<evidence type="ECO:0000255" key="1">
    <source>
        <dbReference type="HAMAP-Rule" id="MF_01217"/>
    </source>
</evidence>
<evidence type="ECO:0000255" key="2">
    <source>
        <dbReference type="PROSITE-ProRule" id="PRU00258"/>
    </source>
</evidence>
<accession>A7GRI0</accession>